<dbReference type="EC" id="2.4.1.227" evidence="1"/>
<dbReference type="EMBL" id="CP000264">
    <property type="protein sequence ID" value="ABD55677.1"/>
    <property type="molecule type" value="Genomic_DNA"/>
</dbReference>
<dbReference type="RefSeq" id="WP_011455881.1">
    <property type="nucleotide sequence ID" value="NC_007802.1"/>
</dbReference>
<dbReference type="SMR" id="Q28NN5"/>
<dbReference type="STRING" id="290400.Jann_2760"/>
<dbReference type="CAZy" id="GT28">
    <property type="family name" value="Glycosyltransferase Family 28"/>
</dbReference>
<dbReference type="KEGG" id="jan:Jann_2760"/>
<dbReference type="eggNOG" id="COG0707">
    <property type="taxonomic scope" value="Bacteria"/>
</dbReference>
<dbReference type="HOGENOM" id="CLU_037404_2_1_5"/>
<dbReference type="OrthoDB" id="9808936at2"/>
<dbReference type="UniPathway" id="UPA00219"/>
<dbReference type="Proteomes" id="UP000008326">
    <property type="component" value="Chromosome"/>
</dbReference>
<dbReference type="GO" id="GO:0005886">
    <property type="term" value="C:plasma membrane"/>
    <property type="evidence" value="ECO:0007669"/>
    <property type="project" value="UniProtKB-SubCell"/>
</dbReference>
<dbReference type="GO" id="GO:0051991">
    <property type="term" value="F:UDP-N-acetyl-D-glucosamine:N-acetylmuramoyl-L-alanyl-D-glutamyl-meso-2,6-diaminopimelyl-D-alanyl-D-alanine-diphosphoundecaprenol 4-beta-N-acetylglucosaminlytransferase activity"/>
    <property type="evidence" value="ECO:0007669"/>
    <property type="project" value="RHEA"/>
</dbReference>
<dbReference type="GO" id="GO:0050511">
    <property type="term" value="F:undecaprenyldiphospho-muramoylpentapeptide beta-N-acetylglucosaminyltransferase activity"/>
    <property type="evidence" value="ECO:0007669"/>
    <property type="project" value="UniProtKB-UniRule"/>
</dbReference>
<dbReference type="GO" id="GO:0005975">
    <property type="term" value="P:carbohydrate metabolic process"/>
    <property type="evidence" value="ECO:0007669"/>
    <property type="project" value="InterPro"/>
</dbReference>
<dbReference type="GO" id="GO:0051301">
    <property type="term" value="P:cell division"/>
    <property type="evidence" value="ECO:0007669"/>
    <property type="project" value="UniProtKB-KW"/>
</dbReference>
<dbReference type="GO" id="GO:0071555">
    <property type="term" value="P:cell wall organization"/>
    <property type="evidence" value="ECO:0007669"/>
    <property type="project" value="UniProtKB-KW"/>
</dbReference>
<dbReference type="GO" id="GO:0030259">
    <property type="term" value="P:lipid glycosylation"/>
    <property type="evidence" value="ECO:0007669"/>
    <property type="project" value="UniProtKB-UniRule"/>
</dbReference>
<dbReference type="GO" id="GO:0009252">
    <property type="term" value="P:peptidoglycan biosynthetic process"/>
    <property type="evidence" value="ECO:0007669"/>
    <property type="project" value="UniProtKB-UniRule"/>
</dbReference>
<dbReference type="GO" id="GO:0008360">
    <property type="term" value="P:regulation of cell shape"/>
    <property type="evidence" value="ECO:0007669"/>
    <property type="project" value="UniProtKB-KW"/>
</dbReference>
<dbReference type="CDD" id="cd03785">
    <property type="entry name" value="GT28_MurG"/>
    <property type="match status" value="1"/>
</dbReference>
<dbReference type="Gene3D" id="3.40.50.2000">
    <property type="entry name" value="Glycogen Phosphorylase B"/>
    <property type="match status" value="2"/>
</dbReference>
<dbReference type="HAMAP" id="MF_00033">
    <property type="entry name" value="MurG"/>
    <property type="match status" value="1"/>
</dbReference>
<dbReference type="InterPro" id="IPR006009">
    <property type="entry name" value="GlcNAc_MurG"/>
</dbReference>
<dbReference type="InterPro" id="IPR007235">
    <property type="entry name" value="Glyco_trans_28_C"/>
</dbReference>
<dbReference type="InterPro" id="IPR004276">
    <property type="entry name" value="GlycoTrans_28_N"/>
</dbReference>
<dbReference type="PANTHER" id="PTHR21015:SF22">
    <property type="entry name" value="GLYCOSYLTRANSFERASE"/>
    <property type="match status" value="1"/>
</dbReference>
<dbReference type="PANTHER" id="PTHR21015">
    <property type="entry name" value="UDP-N-ACETYLGLUCOSAMINE--N-ACETYLMURAMYL-(PENTAPEPTIDE) PYROPHOSPHORYL-UNDECAPRENOL N-ACETYLGLUCOSAMINE TRANSFERASE 1"/>
    <property type="match status" value="1"/>
</dbReference>
<dbReference type="Pfam" id="PF04101">
    <property type="entry name" value="Glyco_tran_28_C"/>
    <property type="match status" value="1"/>
</dbReference>
<dbReference type="Pfam" id="PF03033">
    <property type="entry name" value="Glyco_transf_28"/>
    <property type="match status" value="1"/>
</dbReference>
<dbReference type="SUPFAM" id="SSF53756">
    <property type="entry name" value="UDP-Glycosyltransferase/glycogen phosphorylase"/>
    <property type="match status" value="1"/>
</dbReference>
<gene>
    <name evidence="1" type="primary">murG</name>
    <name type="ordered locus">Jann_2760</name>
</gene>
<feature type="chain" id="PRO_0000315104" description="UDP-N-acetylglucosamine--N-acetylmuramyl-(pentapeptide) pyrophosphoryl-undecaprenol N-acetylglucosamine transferase">
    <location>
        <begin position="1"/>
        <end position="367"/>
    </location>
</feature>
<feature type="binding site" evidence="1">
    <location>
        <begin position="13"/>
        <end position="15"/>
    </location>
    <ligand>
        <name>UDP-N-acetyl-alpha-D-glucosamine</name>
        <dbReference type="ChEBI" id="CHEBI:57705"/>
    </ligand>
</feature>
<feature type="binding site" evidence="1">
    <location>
        <position position="125"/>
    </location>
    <ligand>
        <name>UDP-N-acetyl-alpha-D-glucosamine</name>
        <dbReference type="ChEBI" id="CHEBI:57705"/>
    </ligand>
</feature>
<feature type="binding site" evidence="1">
    <location>
        <position position="165"/>
    </location>
    <ligand>
        <name>UDP-N-acetyl-alpha-D-glucosamine</name>
        <dbReference type="ChEBI" id="CHEBI:57705"/>
    </ligand>
</feature>
<feature type="binding site" evidence="1">
    <location>
        <position position="192"/>
    </location>
    <ligand>
        <name>UDP-N-acetyl-alpha-D-glucosamine</name>
        <dbReference type="ChEBI" id="CHEBI:57705"/>
    </ligand>
</feature>
<feature type="binding site" evidence="1">
    <location>
        <position position="293"/>
    </location>
    <ligand>
        <name>UDP-N-acetyl-alpha-D-glucosamine</name>
        <dbReference type="ChEBI" id="CHEBI:57705"/>
    </ligand>
</feature>
<protein>
    <recommendedName>
        <fullName evidence="1">UDP-N-acetylglucosamine--N-acetylmuramyl-(pentapeptide) pyrophosphoryl-undecaprenol N-acetylglucosamine transferase</fullName>
        <ecNumber evidence="1">2.4.1.227</ecNumber>
    </recommendedName>
    <alternativeName>
        <fullName evidence="1">Undecaprenyl-PP-MurNAc-pentapeptide-UDPGlcNAc GlcNAc transferase</fullName>
    </alternativeName>
</protein>
<comment type="function">
    <text evidence="1">Cell wall formation. Catalyzes the transfer of a GlcNAc subunit on undecaprenyl-pyrophosphoryl-MurNAc-pentapeptide (lipid intermediate I) to form undecaprenyl-pyrophosphoryl-MurNAc-(pentapeptide)GlcNAc (lipid intermediate II).</text>
</comment>
<comment type="catalytic activity">
    <reaction evidence="1">
        <text>di-trans,octa-cis-undecaprenyl diphospho-N-acetyl-alpha-D-muramoyl-L-alanyl-D-glutamyl-meso-2,6-diaminopimeloyl-D-alanyl-D-alanine + UDP-N-acetyl-alpha-D-glucosamine = di-trans,octa-cis-undecaprenyl diphospho-[N-acetyl-alpha-D-glucosaminyl-(1-&gt;4)]-N-acetyl-alpha-D-muramoyl-L-alanyl-D-glutamyl-meso-2,6-diaminopimeloyl-D-alanyl-D-alanine + UDP + H(+)</text>
        <dbReference type="Rhea" id="RHEA:31227"/>
        <dbReference type="ChEBI" id="CHEBI:15378"/>
        <dbReference type="ChEBI" id="CHEBI:57705"/>
        <dbReference type="ChEBI" id="CHEBI:58223"/>
        <dbReference type="ChEBI" id="CHEBI:61387"/>
        <dbReference type="ChEBI" id="CHEBI:61388"/>
        <dbReference type="EC" id="2.4.1.227"/>
    </reaction>
</comment>
<comment type="pathway">
    <text evidence="1">Cell wall biogenesis; peptidoglycan biosynthesis.</text>
</comment>
<comment type="subcellular location">
    <subcellularLocation>
        <location evidence="1">Cell inner membrane</location>
        <topology evidence="1">Peripheral membrane protein</topology>
        <orientation evidence="1">Cytoplasmic side</orientation>
    </subcellularLocation>
</comment>
<comment type="similarity">
    <text evidence="1">Belongs to the glycosyltransferase 28 family. MurG subfamily.</text>
</comment>
<name>MURG_JANSC</name>
<sequence length="367" mass="38802">MSKPHLIIAAGGTGGHMFPAQALSEAMLRKGWRVTLSTDARGARYVGGFSHAVEIREVSSATFTRGGALAKLAVPFRIFGGVLTATARMLREKPDVVVGFGGYPTIPAMAAARLTGRPRMLHEQNGVLGRVNRVFAKHVAHVACGTWPTDVPLGADAIHTGNPVRAAIVERGGAPYTPPGDWPMSLLVFGGSQGARILSDVVPAAIALLPEAIRDLLRIAQQAREEDVDRVQAAYDDLSMRVEVDTFLHDMPRRLSEAQLVICRSGASSVADINVVGRPAIYVPLAIAVRDEQTANARGPVDAGAAVLMPESQLTPETLAQTIEQILTQPDAATQMSIAALSVAVPDATERLVALVETLAAPTPQET</sequence>
<reference key="1">
    <citation type="submission" date="2006-02" db="EMBL/GenBank/DDBJ databases">
        <title>Complete sequence of chromosome of Jannaschia sp. CCS1.</title>
        <authorList>
            <consortium name="US DOE Joint Genome Institute"/>
            <person name="Copeland A."/>
            <person name="Lucas S."/>
            <person name="Lapidus A."/>
            <person name="Barry K."/>
            <person name="Detter J.C."/>
            <person name="Glavina del Rio T."/>
            <person name="Hammon N."/>
            <person name="Israni S."/>
            <person name="Pitluck S."/>
            <person name="Brettin T."/>
            <person name="Bruce D."/>
            <person name="Han C."/>
            <person name="Tapia R."/>
            <person name="Gilna P."/>
            <person name="Chertkov O."/>
            <person name="Saunders E."/>
            <person name="Schmutz J."/>
            <person name="Larimer F."/>
            <person name="Land M."/>
            <person name="Kyrpides N."/>
            <person name="Lykidis A."/>
            <person name="Moran M.A."/>
            <person name="Belas R."/>
            <person name="Ye W."/>
            <person name="Buchan A."/>
            <person name="Gonzalez J.M."/>
            <person name="Schell M.A."/>
            <person name="Richardson P."/>
        </authorList>
    </citation>
    <scope>NUCLEOTIDE SEQUENCE [LARGE SCALE GENOMIC DNA]</scope>
    <source>
        <strain>CCS1</strain>
    </source>
</reference>
<accession>Q28NN5</accession>
<keyword id="KW-0131">Cell cycle</keyword>
<keyword id="KW-0132">Cell division</keyword>
<keyword id="KW-0997">Cell inner membrane</keyword>
<keyword id="KW-1003">Cell membrane</keyword>
<keyword id="KW-0133">Cell shape</keyword>
<keyword id="KW-0961">Cell wall biogenesis/degradation</keyword>
<keyword id="KW-0328">Glycosyltransferase</keyword>
<keyword id="KW-0472">Membrane</keyword>
<keyword id="KW-0573">Peptidoglycan synthesis</keyword>
<keyword id="KW-1185">Reference proteome</keyword>
<keyword id="KW-0808">Transferase</keyword>
<evidence type="ECO:0000255" key="1">
    <source>
        <dbReference type="HAMAP-Rule" id="MF_00033"/>
    </source>
</evidence>
<organism>
    <name type="scientific">Jannaschia sp. (strain CCS1)</name>
    <dbReference type="NCBI Taxonomy" id="290400"/>
    <lineage>
        <taxon>Bacteria</taxon>
        <taxon>Pseudomonadati</taxon>
        <taxon>Pseudomonadota</taxon>
        <taxon>Alphaproteobacteria</taxon>
        <taxon>Rhodobacterales</taxon>
        <taxon>Roseobacteraceae</taxon>
        <taxon>Jannaschia</taxon>
    </lineage>
</organism>
<proteinExistence type="inferred from homology"/>